<comment type="function">
    <text evidence="1">Cell division inhibitor that blocks the formation of polar Z ring septums. Rapidly oscillates between the poles of the cell to destabilize FtsZ filaments that have formed before they mature into polar Z rings. Prevents FtsZ polymerization.</text>
</comment>
<comment type="subunit">
    <text evidence="1">Interacts with MinD and FtsZ.</text>
</comment>
<comment type="similarity">
    <text evidence="1">Belongs to the MinC family.</text>
</comment>
<reference key="1">
    <citation type="journal article" date="2004" name="Nucleic Acids Res.">
        <title>Thermoadaptation trait revealed by the genome sequence of thermophilic Geobacillus kaustophilus.</title>
        <authorList>
            <person name="Takami H."/>
            <person name="Takaki Y."/>
            <person name="Chee G.-J."/>
            <person name="Nishi S."/>
            <person name="Shimamura S."/>
            <person name="Suzuki H."/>
            <person name="Matsui S."/>
            <person name="Uchiyama I."/>
        </authorList>
    </citation>
    <scope>NUCLEOTIDE SEQUENCE [LARGE SCALE GENOMIC DNA]</scope>
    <source>
        <strain>HTA426</strain>
    </source>
</reference>
<sequence length="227" mass="25270">MAKQKQQYVTIKGTKDGLTLHLDDRCSYDDLLKEIEERLVKQAGVAPDSPLVSVHLKIGNRYLTPAQEEEVRALIRRSKNLVVDSIESNVMSKAEAIEWMRKTEIVPVSRIVRSGQVLHVEGDLLLIGDVNPGGTVIAGGNIFILGALRGIAHAGYAGNKQAIIVASVMKPMQLRIGDIMSRAPDSKTDEGNEMECAYIDEHNQIVVDRLQLLMHLRPNLTRLERRM</sequence>
<evidence type="ECO:0000255" key="1">
    <source>
        <dbReference type="HAMAP-Rule" id="MF_00267"/>
    </source>
</evidence>
<dbReference type="EMBL" id="BA000043">
    <property type="protein sequence ID" value="BAD76899.1"/>
    <property type="molecule type" value="Genomic_DNA"/>
</dbReference>
<dbReference type="SMR" id="Q5KWN7"/>
<dbReference type="STRING" id="235909.GK2614"/>
<dbReference type="KEGG" id="gka:GK2614"/>
<dbReference type="eggNOG" id="COG0850">
    <property type="taxonomic scope" value="Bacteria"/>
</dbReference>
<dbReference type="HOGENOM" id="CLU_048711_1_1_9"/>
<dbReference type="Proteomes" id="UP000001172">
    <property type="component" value="Chromosome"/>
</dbReference>
<dbReference type="GO" id="GO:0000902">
    <property type="term" value="P:cell morphogenesis"/>
    <property type="evidence" value="ECO:0007669"/>
    <property type="project" value="InterPro"/>
</dbReference>
<dbReference type="GO" id="GO:0000917">
    <property type="term" value="P:division septum assembly"/>
    <property type="evidence" value="ECO:0007669"/>
    <property type="project" value="UniProtKB-KW"/>
</dbReference>
<dbReference type="GO" id="GO:1901891">
    <property type="term" value="P:regulation of cell septum assembly"/>
    <property type="evidence" value="ECO:0007669"/>
    <property type="project" value="InterPro"/>
</dbReference>
<dbReference type="FunFam" id="2.160.20.70:FF:000003">
    <property type="entry name" value="Probable septum site-determining protein MinC"/>
    <property type="match status" value="1"/>
</dbReference>
<dbReference type="Gene3D" id="2.160.20.70">
    <property type="match status" value="1"/>
</dbReference>
<dbReference type="Gene3D" id="3.30.160.540">
    <property type="match status" value="1"/>
</dbReference>
<dbReference type="HAMAP" id="MF_00267">
    <property type="entry name" value="MinC"/>
    <property type="match status" value="1"/>
</dbReference>
<dbReference type="InterPro" id="IPR016098">
    <property type="entry name" value="CAP/MinC_C"/>
</dbReference>
<dbReference type="InterPro" id="IPR013033">
    <property type="entry name" value="MinC"/>
</dbReference>
<dbReference type="InterPro" id="IPR036145">
    <property type="entry name" value="MinC_C_sf"/>
</dbReference>
<dbReference type="InterPro" id="IPR055219">
    <property type="entry name" value="MinC_N_1"/>
</dbReference>
<dbReference type="InterPro" id="IPR005526">
    <property type="entry name" value="Septum_form_inhib_MinC_C"/>
</dbReference>
<dbReference type="NCBIfam" id="TIGR01222">
    <property type="entry name" value="minC"/>
    <property type="match status" value="1"/>
</dbReference>
<dbReference type="PANTHER" id="PTHR34108">
    <property type="entry name" value="SEPTUM SITE-DETERMINING PROTEIN MINC"/>
    <property type="match status" value="1"/>
</dbReference>
<dbReference type="PANTHER" id="PTHR34108:SF1">
    <property type="entry name" value="SEPTUM SITE-DETERMINING PROTEIN MINC"/>
    <property type="match status" value="1"/>
</dbReference>
<dbReference type="Pfam" id="PF03775">
    <property type="entry name" value="MinC_C"/>
    <property type="match status" value="1"/>
</dbReference>
<dbReference type="Pfam" id="PF22642">
    <property type="entry name" value="MinC_N_1"/>
    <property type="match status" value="1"/>
</dbReference>
<dbReference type="SUPFAM" id="SSF63848">
    <property type="entry name" value="Cell-division inhibitor MinC, C-terminal domain"/>
    <property type="match status" value="1"/>
</dbReference>
<feature type="chain" id="PRO_1000047831" description="Probable septum site-determining protein MinC">
    <location>
        <begin position="1"/>
        <end position="227"/>
    </location>
</feature>
<proteinExistence type="inferred from homology"/>
<accession>Q5KWN7</accession>
<name>MINC_GEOKA</name>
<protein>
    <recommendedName>
        <fullName evidence="1">Probable septum site-determining protein MinC</fullName>
    </recommendedName>
</protein>
<organism>
    <name type="scientific">Geobacillus kaustophilus (strain HTA426)</name>
    <dbReference type="NCBI Taxonomy" id="235909"/>
    <lineage>
        <taxon>Bacteria</taxon>
        <taxon>Bacillati</taxon>
        <taxon>Bacillota</taxon>
        <taxon>Bacilli</taxon>
        <taxon>Bacillales</taxon>
        <taxon>Anoxybacillaceae</taxon>
        <taxon>Geobacillus</taxon>
        <taxon>Geobacillus thermoleovorans group</taxon>
    </lineage>
</organism>
<keyword id="KW-0131">Cell cycle</keyword>
<keyword id="KW-0132">Cell division</keyword>
<keyword id="KW-1185">Reference proteome</keyword>
<keyword id="KW-0717">Septation</keyword>
<gene>
    <name evidence="1" type="primary">minC</name>
    <name type="ordered locus">GK2614</name>
</gene>